<proteinExistence type="evidence at protein level"/>
<comment type="function">
    <text>PPIases accelerate the folding of proteins during protein synthesis.</text>
</comment>
<comment type="catalytic activity">
    <reaction evidence="7">
        <text>[protein]-peptidylproline (omega=180) = [protein]-peptidylproline (omega=0)</text>
        <dbReference type="Rhea" id="RHEA:16237"/>
        <dbReference type="Rhea" id="RHEA-COMP:10747"/>
        <dbReference type="Rhea" id="RHEA-COMP:10748"/>
        <dbReference type="ChEBI" id="CHEBI:83833"/>
        <dbReference type="ChEBI" id="CHEBI:83834"/>
        <dbReference type="EC" id="5.2.1.8"/>
    </reaction>
</comment>
<comment type="activity regulation">
    <text>Inhibited by both FK506 and rapamycin, but not by cyclosporin A.</text>
</comment>
<comment type="subcellular location">
    <subcellularLocation>
        <location evidence="4 6">Endoplasmic reticulum lumen</location>
    </subcellularLocation>
</comment>
<comment type="tissue specificity">
    <text evidence="6 7">Expressed in aorta, brain, heart, kidney, lung, spleen and testis (PubMed:11071917, PubMed:7493967). Not detected in liver (PubMed:7493967).</text>
</comment>
<comment type="developmental stage">
    <text evidence="6">Expressed in 12-day-old mouse; no or barely detectable expression is found in adult tissues.</text>
</comment>
<comment type="PTM">
    <text evidence="7">N-glycosylated.</text>
</comment>
<comment type="PTM">
    <text evidence="7">Phosphorylated.</text>
</comment>
<protein>
    <recommendedName>
        <fullName>Peptidyl-prolyl cis-trans isomerase FKBP10</fullName>
        <shortName>PPIase FKBP10</shortName>
        <ecNumber evidence="7">5.2.1.8</ecNumber>
    </recommendedName>
    <alternativeName>
        <fullName>65 kDa FK506-binding protein</fullName>
        <shortName>65 kDa FKBP</shortName>
        <shortName evidence="8">FKBP-65</shortName>
    </alternativeName>
    <alternativeName>
        <fullName>FK506-binding protein 10</fullName>
        <shortName>FKBP-10</shortName>
    </alternativeName>
    <alternativeName>
        <fullName>Immunophilin FKBP65</fullName>
    </alternativeName>
    <alternativeName>
        <fullName>Rotamase</fullName>
    </alternativeName>
</protein>
<accession>Q61576</accession>
<accession>A2A4I0</accession>
<accession>Q8VHI1</accession>
<evidence type="ECO:0000255" key="1"/>
<evidence type="ECO:0000255" key="2">
    <source>
        <dbReference type="PROSITE-ProRule" id="PRU00277"/>
    </source>
</evidence>
<evidence type="ECO:0000255" key="3">
    <source>
        <dbReference type="PROSITE-ProRule" id="PRU00448"/>
    </source>
</evidence>
<evidence type="ECO:0000255" key="4">
    <source>
        <dbReference type="PROSITE-ProRule" id="PRU10138"/>
    </source>
</evidence>
<evidence type="ECO:0000256" key="5">
    <source>
        <dbReference type="SAM" id="MobiDB-lite"/>
    </source>
</evidence>
<evidence type="ECO:0000269" key="6">
    <source>
    </source>
</evidence>
<evidence type="ECO:0000269" key="7">
    <source>
    </source>
</evidence>
<evidence type="ECO:0000303" key="8">
    <source>
    </source>
</evidence>
<evidence type="ECO:0000305" key="9"/>
<reference key="1">
    <citation type="journal article" date="1993" name="Genomics">
        <title>Sequence and localization of a novel FK506-binding protein to mouse chromosome 11.</title>
        <authorList>
            <person name="Simek S.L."/>
            <person name="Kozak C.A."/>
            <person name="Winterstein D."/>
            <person name="Hegamyer G."/>
            <person name="Colburn N.H."/>
        </authorList>
    </citation>
    <scope>NUCLEOTIDE SEQUENCE</scope>
    <source>
        <strain>JB6</strain>
        <tissue>Epidermis</tissue>
    </source>
</reference>
<reference key="2">
    <citation type="journal article" date="1995" name="J. Biol. Chem.">
        <title>Molecular cloning, DNA sequence analysis, and biochemical characterization of a novel 65-kDa FK506-binding protein (FKBP65).</title>
        <authorList>
            <person name="Coss M.C."/>
            <person name="Winterstein D."/>
            <person name="Sowder R.C. II"/>
            <person name="Simek S.L."/>
        </authorList>
    </citation>
    <scope>NUCLEOTIDE SEQUENCE [MRNA]</scope>
    <scope>CATALYTIC ACTIVITY</scope>
    <scope>TISSUE SPECIFICITY</scope>
    <scope>GLYCOSYLATION</scope>
    <scope>PHOSPHORYLATION</scope>
</reference>
<reference key="3">
    <citation type="journal article" date="2002" name="Genomics">
        <title>Genomic organization of mouse and human 65 kDa FK506-binding protein genes and evolution of the FKBP multigene family.</title>
        <authorList>
            <person name="Patterson C.E."/>
            <person name="Gao J."/>
            <person name="Rooney A.P."/>
            <person name="Davis E.C."/>
        </authorList>
    </citation>
    <scope>NUCLEOTIDE SEQUENCE [GENOMIC DNA]</scope>
</reference>
<reference key="4">
    <citation type="journal article" date="2009" name="PLoS Biol.">
        <title>Lineage-specific biology revealed by a finished genome assembly of the mouse.</title>
        <authorList>
            <person name="Church D.M."/>
            <person name="Goodstadt L."/>
            <person name="Hillier L.W."/>
            <person name="Zody M.C."/>
            <person name="Goldstein S."/>
            <person name="She X."/>
            <person name="Bult C.J."/>
            <person name="Agarwala R."/>
            <person name="Cherry J.L."/>
            <person name="DiCuccio M."/>
            <person name="Hlavina W."/>
            <person name="Kapustin Y."/>
            <person name="Meric P."/>
            <person name="Maglott D."/>
            <person name="Birtle Z."/>
            <person name="Marques A.C."/>
            <person name="Graves T."/>
            <person name="Zhou S."/>
            <person name="Teague B."/>
            <person name="Potamousis K."/>
            <person name="Churas C."/>
            <person name="Place M."/>
            <person name="Herschleb J."/>
            <person name="Runnheim R."/>
            <person name="Forrest D."/>
            <person name="Amos-Landgraf J."/>
            <person name="Schwartz D.C."/>
            <person name="Cheng Z."/>
            <person name="Lindblad-Toh K."/>
            <person name="Eichler E.E."/>
            <person name="Ponting C.P."/>
        </authorList>
    </citation>
    <scope>NUCLEOTIDE SEQUENCE [LARGE SCALE GENOMIC DNA]</scope>
    <source>
        <strain>C57BL/6J</strain>
    </source>
</reference>
<reference key="5">
    <citation type="submission" date="2005-07" db="EMBL/GenBank/DDBJ databases">
        <authorList>
            <person name="Mural R.J."/>
            <person name="Adams M.D."/>
            <person name="Myers E.W."/>
            <person name="Smith H.O."/>
            <person name="Venter J.C."/>
        </authorList>
    </citation>
    <scope>NUCLEOTIDE SEQUENCE [LARGE SCALE GENOMIC DNA]</scope>
</reference>
<reference key="6">
    <citation type="journal article" date="2004" name="Genome Res.">
        <title>The status, quality, and expansion of the NIH full-length cDNA project: the Mammalian Gene Collection (MGC).</title>
        <authorList>
            <consortium name="The MGC Project Team"/>
        </authorList>
    </citation>
    <scope>NUCLEOTIDE SEQUENCE [LARGE SCALE MRNA]</scope>
    <source>
        <strain>FVB/N-3</strain>
        <tissue>Mammary tumor</tissue>
    </source>
</reference>
<reference key="7">
    <citation type="journal article" date="2000" name="Mol. Biol. Cell">
        <title>Developmental regulation of FKBP65: an ER localized extracellular matrix-binding protein.</title>
        <authorList>
            <person name="Patterson C.E."/>
            <person name="Schaub T."/>
            <person name="Coleman E.J."/>
            <person name="Davis E.C."/>
        </authorList>
    </citation>
    <scope>SUBCELLULAR LOCATION</scope>
    <scope>DEVELOPMENTAL STAGE</scope>
    <scope>TISSUE SPECIFICITY</scope>
</reference>
<reference key="8">
    <citation type="journal article" date="2010" name="Cell">
        <title>A tissue-specific atlas of mouse protein phosphorylation and expression.</title>
        <authorList>
            <person name="Huttlin E.L."/>
            <person name="Jedrychowski M.P."/>
            <person name="Elias J.E."/>
            <person name="Goswami T."/>
            <person name="Rad R."/>
            <person name="Beausoleil S.A."/>
            <person name="Villen J."/>
            <person name="Haas W."/>
            <person name="Sowa M.E."/>
            <person name="Gygi S.P."/>
        </authorList>
    </citation>
    <scope>IDENTIFICATION BY MASS SPECTROMETRY [LARGE SCALE ANALYSIS]</scope>
    <source>
        <tissue>Heart</tissue>
        <tissue>Kidney</tissue>
        <tissue>Lung</tissue>
        <tissue>Spleen</tissue>
        <tissue>Testis</tissue>
    </source>
</reference>
<keyword id="KW-0106">Calcium</keyword>
<keyword id="KW-0256">Endoplasmic reticulum</keyword>
<keyword id="KW-0325">Glycoprotein</keyword>
<keyword id="KW-0413">Isomerase</keyword>
<keyword id="KW-0479">Metal-binding</keyword>
<keyword id="KW-0597">Phosphoprotein</keyword>
<keyword id="KW-1185">Reference proteome</keyword>
<keyword id="KW-0677">Repeat</keyword>
<keyword id="KW-0697">Rotamase</keyword>
<keyword id="KW-0732">Signal</keyword>
<gene>
    <name type="primary">Fkbp10</name>
    <name type="synonym">Fkbp-rs</name>
    <name type="synonym">Fkbp1-rs</name>
    <name type="synonym">Fkbp6</name>
    <name type="synonym">Fkbp65</name>
    <name type="synonym">Fkbprp</name>
</gene>
<organism>
    <name type="scientific">Mus musculus</name>
    <name type="common">Mouse</name>
    <dbReference type="NCBI Taxonomy" id="10090"/>
    <lineage>
        <taxon>Eukaryota</taxon>
        <taxon>Metazoa</taxon>
        <taxon>Chordata</taxon>
        <taxon>Craniata</taxon>
        <taxon>Vertebrata</taxon>
        <taxon>Euteleostomi</taxon>
        <taxon>Mammalia</taxon>
        <taxon>Eutheria</taxon>
        <taxon>Euarchontoglires</taxon>
        <taxon>Glires</taxon>
        <taxon>Rodentia</taxon>
        <taxon>Myomorpha</taxon>
        <taxon>Muroidea</taxon>
        <taxon>Muridae</taxon>
        <taxon>Murinae</taxon>
        <taxon>Mus</taxon>
        <taxon>Mus</taxon>
    </lineage>
</organism>
<dbReference type="EC" id="5.2.1.8" evidence="7"/>
<dbReference type="EMBL" id="L07063">
    <property type="protein sequence ID" value="AAC37678.1"/>
    <property type="molecule type" value="mRNA"/>
</dbReference>
<dbReference type="EMBL" id="AF456413">
    <property type="protein sequence ID" value="AAL57621.1"/>
    <property type="molecule type" value="Genomic_DNA"/>
</dbReference>
<dbReference type="EMBL" id="AF456412">
    <property type="protein sequence ID" value="AAL57621.1"/>
    <property type="status" value="JOINED"/>
    <property type="molecule type" value="Genomic_DNA"/>
</dbReference>
<dbReference type="EMBL" id="AL590968">
    <property type="status" value="NOT_ANNOTATED_CDS"/>
    <property type="molecule type" value="Genomic_DNA"/>
</dbReference>
<dbReference type="EMBL" id="CH466662">
    <property type="protein sequence ID" value="EDL02562.1"/>
    <property type="molecule type" value="Genomic_DNA"/>
</dbReference>
<dbReference type="EMBL" id="BC029546">
    <property type="protein sequence ID" value="AAH29546.1"/>
    <property type="molecule type" value="mRNA"/>
</dbReference>
<dbReference type="CCDS" id="CCDS25422.1"/>
<dbReference type="PIR" id="I49669">
    <property type="entry name" value="I49669"/>
</dbReference>
<dbReference type="RefSeq" id="NP_034351.2">
    <property type="nucleotide sequence ID" value="NM_010221.2"/>
</dbReference>
<dbReference type="SMR" id="Q61576"/>
<dbReference type="BioGRID" id="199687">
    <property type="interactions" value="13"/>
</dbReference>
<dbReference type="DIP" id="DIP-448N"/>
<dbReference type="FunCoup" id="Q61576">
    <property type="interactions" value="350"/>
</dbReference>
<dbReference type="STRING" id="10090.ENSMUSP00000001595"/>
<dbReference type="GlyConnect" id="2577">
    <property type="glycosylation" value="3 N-Linked glycans (1 site)"/>
</dbReference>
<dbReference type="GlyCosmos" id="Q61576">
    <property type="glycosylation" value="7 sites, 3 glycans"/>
</dbReference>
<dbReference type="GlyGen" id="Q61576">
    <property type="glycosylation" value="7 sites, 6 N-linked glycans (4 sites)"/>
</dbReference>
<dbReference type="iPTMnet" id="Q61576"/>
<dbReference type="PhosphoSitePlus" id="Q61576"/>
<dbReference type="SwissPalm" id="Q61576"/>
<dbReference type="jPOST" id="Q61576"/>
<dbReference type="PaxDb" id="10090-ENSMUSP00000001595"/>
<dbReference type="PeptideAtlas" id="Q61576"/>
<dbReference type="ProteomicsDB" id="271769"/>
<dbReference type="Pumba" id="Q61576"/>
<dbReference type="Antibodypedia" id="28953">
    <property type="antibodies" value="279 antibodies from 31 providers"/>
</dbReference>
<dbReference type="DNASU" id="14230"/>
<dbReference type="Ensembl" id="ENSMUST00000001595.10">
    <property type="protein sequence ID" value="ENSMUSP00000001595.4"/>
    <property type="gene ID" value="ENSMUSG00000001555.11"/>
</dbReference>
<dbReference type="GeneID" id="14230"/>
<dbReference type="KEGG" id="mmu:14230"/>
<dbReference type="UCSC" id="uc007llb.2">
    <property type="organism name" value="mouse"/>
</dbReference>
<dbReference type="AGR" id="MGI:104769"/>
<dbReference type="CTD" id="60681"/>
<dbReference type="MGI" id="MGI:104769">
    <property type="gene designation" value="Fkbp10"/>
</dbReference>
<dbReference type="VEuPathDB" id="HostDB:ENSMUSG00000001555"/>
<dbReference type="eggNOG" id="KOG0549">
    <property type="taxonomic scope" value="Eukaryota"/>
</dbReference>
<dbReference type="GeneTree" id="ENSGT00940000156331"/>
<dbReference type="HOGENOM" id="CLU_034907_0_0_1"/>
<dbReference type="InParanoid" id="Q61576"/>
<dbReference type="OMA" id="YDRHTLV"/>
<dbReference type="OrthoDB" id="1902587at2759"/>
<dbReference type="PhylomeDB" id="Q61576"/>
<dbReference type="TreeFam" id="TF105296"/>
<dbReference type="BRENDA" id="5.2.1.8">
    <property type="organism ID" value="3474"/>
</dbReference>
<dbReference type="BioGRID-ORCS" id="14230">
    <property type="hits" value="2 hits in 82 CRISPR screens"/>
</dbReference>
<dbReference type="ChiTaRS" id="Fkbp10">
    <property type="organism name" value="mouse"/>
</dbReference>
<dbReference type="PRO" id="PR:Q61576"/>
<dbReference type="Proteomes" id="UP000000589">
    <property type="component" value="Chromosome 11"/>
</dbReference>
<dbReference type="RNAct" id="Q61576">
    <property type="molecule type" value="protein"/>
</dbReference>
<dbReference type="Bgee" id="ENSMUSG00000001555">
    <property type="expression patterns" value="Expressed in vault of skull and 202 other cell types or tissues"/>
</dbReference>
<dbReference type="ExpressionAtlas" id="Q61576">
    <property type="expression patterns" value="baseline and differential"/>
</dbReference>
<dbReference type="GO" id="GO:0005783">
    <property type="term" value="C:endoplasmic reticulum"/>
    <property type="evidence" value="ECO:0000314"/>
    <property type="project" value="MGI"/>
</dbReference>
<dbReference type="GO" id="GO:0005788">
    <property type="term" value="C:endoplasmic reticulum lumen"/>
    <property type="evidence" value="ECO:0007669"/>
    <property type="project" value="UniProtKB-SubCell"/>
</dbReference>
<dbReference type="GO" id="GO:0016020">
    <property type="term" value="C:membrane"/>
    <property type="evidence" value="ECO:0000314"/>
    <property type="project" value="MGI"/>
</dbReference>
<dbReference type="GO" id="GO:0005758">
    <property type="term" value="C:mitochondrial intermembrane space"/>
    <property type="evidence" value="ECO:0000314"/>
    <property type="project" value="MGI"/>
</dbReference>
<dbReference type="GO" id="GO:0005509">
    <property type="term" value="F:calcium ion binding"/>
    <property type="evidence" value="ECO:0007669"/>
    <property type="project" value="InterPro"/>
</dbReference>
<dbReference type="GO" id="GO:0005528">
    <property type="term" value="F:FK506 binding"/>
    <property type="evidence" value="ECO:0000314"/>
    <property type="project" value="MGI"/>
</dbReference>
<dbReference type="GO" id="GO:0003755">
    <property type="term" value="F:peptidyl-prolyl cis-trans isomerase activity"/>
    <property type="evidence" value="ECO:0000314"/>
    <property type="project" value="MGI"/>
</dbReference>
<dbReference type="GO" id="GO:0035909">
    <property type="term" value="P:aorta morphogenesis"/>
    <property type="evidence" value="ECO:0000315"/>
    <property type="project" value="MGI"/>
</dbReference>
<dbReference type="GO" id="GO:0030199">
    <property type="term" value="P:collagen fibril organization"/>
    <property type="evidence" value="ECO:0000315"/>
    <property type="project" value="MGI"/>
</dbReference>
<dbReference type="GO" id="GO:0085029">
    <property type="term" value="P:extracellular matrix assembly"/>
    <property type="evidence" value="ECO:0000315"/>
    <property type="project" value="MGI"/>
</dbReference>
<dbReference type="GO" id="GO:0001701">
    <property type="term" value="P:in utero embryonic development"/>
    <property type="evidence" value="ECO:0000315"/>
    <property type="project" value="MGI"/>
</dbReference>
<dbReference type="GO" id="GO:0042060">
    <property type="term" value="P:wound healing"/>
    <property type="evidence" value="ECO:0000315"/>
    <property type="project" value="MGI"/>
</dbReference>
<dbReference type="CDD" id="cd00051">
    <property type="entry name" value="EFh"/>
    <property type="match status" value="1"/>
</dbReference>
<dbReference type="FunFam" id="3.10.50.40:FF:000002">
    <property type="entry name" value="Peptidylprolyl isomerase"/>
    <property type="match status" value="4"/>
</dbReference>
<dbReference type="Gene3D" id="3.10.50.40">
    <property type="match status" value="4"/>
</dbReference>
<dbReference type="Gene3D" id="1.10.238.10">
    <property type="entry name" value="EF-hand"/>
    <property type="match status" value="1"/>
</dbReference>
<dbReference type="InterPro" id="IPR011992">
    <property type="entry name" value="EF-hand-dom_pair"/>
</dbReference>
<dbReference type="InterPro" id="IPR018247">
    <property type="entry name" value="EF_Hand_1_Ca_BS"/>
</dbReference>
<dbReference type="InterPro" id="IPR002048">
    <property type="entry name" value="EF_hand_dom"/>
</dbReference>
<dbReference type="InterPro" id="IPR051989">
    <property type="entry name" value="FKBP-like_isomerase"/>
</dbReference>
<dbReference type="InterPro" id="IPR046357">
    <property type="entry name" value="PPIase_dom_sf"/>
</dbReference>
<dbReference type="InterPro" id="IPR001179">
    <property type="entry name" value="PPIase_FKBP_dom"/>
</dbReference>
<dbReference type="PANTHER" id="PTHR46046:SF3">
    <property type="entry name" value="PEPTIDYL-PROLYL CIS-TRANS ISOMERASE FKBP10"/>
    <property type="match status" value="1"/>
</dbReference>
<dbReference type="PANTHER" id="PTHR46046">
    <property type="entry name" value="PEPTIDYLPROLYL ISOMERASE"/>
    <property type="match status" value="1"/>
</dbReference>
<dbReference type="Pfam" id="PF13202">
    <property type="entry name" value="EF-hand_5"/>
    <property type="match status" value="2"/>
</dbReference>
<dbReference type="Pfam" id="PF00254">
    <property type="entry name" value="FKBP_C"/>
    <property type="match status" value="4"/>
</dbReference>
<dbReference type="SMART" id="SM00054">
    <property type="entry name" value="EFh"/>
    <property type="match status" value="2"/>
</dbReference>
<dbReference type="SUPFAM" id="SSF47473">
    <property type="entry name" value="EF-hand"/>
    <property type="match status" value="1"/>
</dbReference>
<dbReference type="SUPFAM" id="SSF54534">
    <property type="entry name" value="FKBP-like"/>
    <property type="match status" value="4"/>
</dbReference>
<dbReference type="PROSITE" id="PS00018">
    <property type="entry name" value="EF_HAND_1"/>
    <property type="match status" value="1"/>
</dbReference>
<dbReference type="PROSITE" id="PS50222">
    <property type="entry name" value="EF_HAND_2"/>
    <property type="match status" value="2"/>
</dbReference>
<dbReference type="PROSITE" id="PS00014">
    <property type="entry name" value="ER_TARGET"/>
    <property type="match status" value="1"/>
</dbReference>
<dbReference type="PROSITE" id="PS50059">
    <property type="entry name" value="FKBP_PPIASE"/>
    <property type="match status" value="4"/>
</dbReference>
<name>FKB10_MOUSE</name>
<sequence length="581" mass="64697">MFLVGSSSHTLHRLRILPLLLLLQTLERGLGRASPAGAPLEDVVIERYHIPRACPREVQMGDFVRYHYNGTFEDGKKFDSSYDRSTLVAIVVGVGRLITGMDRGLMGMCVNERRRLIVPPHLGYGSIGVAGLIPPDATLYFDVVLLDVWNKADTVQSTILLRPPYCPRMVQNSDFVRYHYNGTLLDGTAFDNSYSRGGTYDTYIGSGWLIKGMDQGLLGMCPGEKRKIIIPPFLAYGEKGYGTVIPPQASLVFYVLLLDVHNPKDTVQLETLELPQGCVRRAVAGDFMRYHYNGSLMDGTLFDSSYSRNHTYNTYVGQGYIIPGMDQGLQGACIGERRRITVPPHLAYGENGTGDKIPGSAVLIFDVHVIDFHNPSDPVEIKTLSRPPENCNETSKIGDFIRYHYNCSLLDGTRLFSSHDYEAPQEITLGANKVIEGLDRGLQGMCVGERRQLIVPPHLAHGENGARGVPGSAVLLFEVELVSREDGLPTGYLFVWYQDPSTSLFEDMDLNKDGEVPPEEFSSFIKAQVNEGKGRLMPGQDPDKTISDMFQNQDRNQDGKITAEELKLKSDEDQERVHEEL</sequence>
<feature type="signal peptide" evidence="1">
    <location>
        <begin position="1"/>
        <end position="33"/>
    </location>
</feature>
<feature type="chain" id="PRO_0000025518" description="Peptidyl-prolyl cis-trans isomerase FKBP10">
    <location>
        <begin position="34"/>
        <end position="581"/>
    </location>
</feature>
<feature type="domain" description="PPIase FKBP-type 1" evidence="2">
    <location>
        <begin position="61"/>
        <end position="149"/>
    </location>
</feature>
<feature type="domain" description="PPIase FKBP-type 2" evidence="2">
    <location>
        <begin position="173"/>
        <end position="261"/>
    </location>
</feature>
<feature type="domain" description="PPIase FKBP-type 3" evidence="2">
    <location>
        <begin position="285"/>
        <end position="373"/>
    </location>
</feature>
<feature type="domain" description="PPIase FKBP-type 4" evidence="2">
    <location>
        <begin position="398"/>
        <end position="485"/>
    </location>
</feature>
<feature type="domain" description="EF-hand 1" evidence="3">
    <location>
        <begin position="496"/>
        <end position="531"/>
    </location>
</feature>
<feature type="domain" description="EF-hand 2" evidence="3">
    <location>
        <begin position="541"/>
        <end position="576"/>
    </location>
</feature>
<feature type="region of interest" description="Disordered" evidence="5">
    <location>
        <begin position="533"/>
        <end position="581"/>
    </location>
</feature>
<feature type="short sequence motif" description="Prevents secretion from ER" evidence="4">
    <location>
        <begin position="578"/>
        <end position="581"/>
    </location>
</feature>
<feature type="compositionally biased region" description="Basic and acidic residues" evidence="5">
    <location>
        <begin position="555"/>
        <end position="581"/>
    </location>
</feature>
<feature type="binding site" evidence="9">
    <location>
        <position position="509"/>
    </location>
    <ligand>
        <name>Ca(2+)</name>
        <dbReference type="ChEBI" id="CHEBI:29108"/>
        <label>1</label>
    </ligand>
</feature>
<feature type="binding site" evidence="9">
    <location>
        <position position="511"/>
    </location>
    <ligand>
        <name>Ca(2+)</name>
        <dbReference type="ChEBI" id="CHEBI:29108"/>
        <label>1</label>
    </ligand>
</feature>
<feature type="binding site" evidence="9">
    <location>
        <position position="513"/>
    </location>
    <ligand>
        <name>Ca(2+)</name>
        <dbReference type="ChEBI" id="CHEBI:29108"/>
        <label>1</label>
    </ligand>
</feature>
<feature type="binding site" evidence="9">
    <location>
        <position position="515"/>
    </location>
    <ligand>
        <name>Ca(2+)</name>
        <dbReference type="ChEBI" id="CHEBI:29108"/>
        <label>1</label>
    </ligand>
</feature>
<feature type="binding site" evidence="9">
    <location>
        <position position="520"/>
    </location>
    <ligand>
        <name>Ca(2+)</name>
        <dbReference type="ChEBI" id="CHEBI:29108"/>
        <label>1</label>
    </ligand>
</feature>
<feature type="binding site" evidence="3">
    <location>
        <position position="554"/>
    </location>
    <ligand>
        <name>Ca(2+)</name>
        <dbReference type="ChEBI" id="CHEBI:29108"/>
        <label>2</label>
    </ligand>
</feature>
<feature type="binding site" evidence="3">
    <location>
        <position position="556"/>
    </location>
    <ligand>
        <name>Ca(2+)</name>
        <dbReference type="ChEBI" id="CHEBI:29108"/>
        <label>2</label>
    </ligand>
</feature>
<feature type="binding site" evidence="3">
    <location>
        <position position="558"/>
    </location>
    <ligand>
        <name>Ca(2+)</name>
        <dbReference type="ChEBI" id="CHEBI:29108"/>
        <label>2</label>
    </ligand>
</feature>
<feature type="binding site" evidence="3">
    <location>
        <position position="560"/>
    </location>
    <ligand>
        <name>Ca(2+)</name>
        <dbReference type="ChEBI" id="CHEBI:29108"/>
        <label>2</label>
    </ligand>
</feature>
<feature type="binding site" evidence="3">
    <location>
        <position position="565"/>
    </location>
    <ligand>
        <name>Ca(2+)</name>
        <dbReference type="ChEBI" id="CHEBI:29108"/>
        <label>2</label>
    </ligand>
</feature>
<feature type="glycosylation site" description="N-linked (GlcNAc...) asparagine" evidence="1">
    <location>
        <position position="69"/>
    </location>
</feature>
<feature type="glycosylation site" description="N-linked (GlcNAc...) asparagine" evidence="1">
    <location>
        <position position="181"/>
    </location>
</feature>
<feature type="glycosylation site" description="N-linked (GlcNAc...) asparagine" evidence="1">
    <location>
        <position position="293"/>
    </location>
</feature>
<feature type="glycosylation site" description="N-linked (GlcNAc...) asparagine" evidence="1">
    <location>
        <position position="309"/>
    </location>
</feature>
<feature type="glycosylation site" description="N-linked (GlcNAc...) asparagine" evidence="1">
    <location>
        <position position="351"/>
    </location>
</feature>
<feature type="glycosylation site" description="N-linked (GlcNAc...) asparagine" evidence="1">
    <location>
        <position position="392"/>
    </location>
</feature>
<feature type="glycosylation site" description="N-linked (GlcNAc...) asparagine" evidence="1">
    <location>
        <position position="406"/>
    </location>
</feature>
<feature type="sequence conflict" description="In Ref. 2; AAC37678." evidence="9" ref="2">
    <original>L</original>
    <variation>V</variation>
    <location>
        <position position="14"/>
    </location>
</feature>
<feature type="sequence conflict" description="In Ref. 2; AAC37678." evidence="9" ref="2">
    <original>A</original>
    <variation>G</variation>
    <location>
        <position position="189"/>
    </location>
</feature>